<dbReference type="EMBL" id="AL049660">
    <property type="protein sequence ID" value="CAB41196.1"/>
    <property type="molecule type" value="Genomic_DNA"/>
</dbReference>
<dbReference type="EMBL" id="CP002686">
    <property type="protein sequence ID" value="AEE79676.1"/>
    <property type="molecule type" value="Genomic_DNA"/>
</dbReference>
<dbReference type="PIR" id="T06761">
    <property type="entry name" value="T06761"/>
</dbReference>
<dbReference type="RefSeq" id="NP_191318.4">
    <property type="nucleotide sequence ID" value="NM_115619.5"/>
</dbReference>
<dbReference type="SMR" id="Q9SVX4"/>
<dbReference type="FunCoup" id="Q9SVX4">
    <property type="interactions" value="41"/>
</dbReference>
<dbReference type="STRING" id="3702.Q9SVX4"/>
<dbReference type="PaxDb" id="3702-AT3G57590.1"/>
<dbReference type="ProteomicsDB" id="222463"/>
<dbReference type="GeneID" id="824928"/>
<dbReference type="KEGG" id="ath:AT3G57590"/>
<dbReference type="Araport" id="AT3G57590"/>
<dbReference type="TAIR" id="AT3G57590"/>
<dbReference type="eggNOG" id="ENOG502SNHU">
    <property type="taxonomic scope" value="Eukaryota"/>
</dbReference>
<dbReference type="HOGENOM" id="CLU_027176_8_1_1"/>
<dbReference type="InParanoid" id="Q9SVX4"/>
<dbReference type="PhylomeDB" id="Q9SVX4"/>
<dbReference type="PRO" id="PR:Q9SVX4"/>
<dbReference type="Proteomes" id="UP000006548">
    <property type="component" value="Chromosome 3"/>
</dbReference>
<dbReference type="ExpressionAtlas" id="Q9SVX4">
    <property type="expression patterns" value="baseline and differential"/>
</dbReference>
<dbReference type="Gene3D" id="1.20.1280.50">
    <property type="match status" value="1"/>
</dbReference>
<dbReference type="InterPro" id="IPR013187">
    <property type="entry name" value="F-box-assoc_dom_typ3"/>
</dbReference>
<dbReference type="InterPro" id="IPR017451">
    <property type="entry name" value="F-box-assoc_interact_dom"/>
</dbReference>
<dbReference type="InterPro" id="IPR036047">
    <property type="entry name" value="F-box-like_dom_sf"/>
</dbReference>
<dbReference type="InterPro" id="IPR001810">
    <property type="entry name" value="F-box_dom"/>
</dbReference>
<dbReference type="NCBIfam" id="TIGR01640">
    <property type="entry name" value="F_box_assoc_1"/>
    <property type="match status" value="1"/>
</dbReference>
<dbReference type="PANTHER" id="PTHR31111">
    <property type="entry name" value="BNAA05G37150D PROTEIN-RELATED"/>
    <property type="match status" value="1"/>
</dbReference>
<dbReference type="PANTHER" id="PTHR31111:SF130">
    <property type="entry name" value="F-BOX ASSOCIATED UBIQUITINATION EFFECTOR FAMILY PROTEIN"/>
    <property type="match status" value="1"/>
</dbReference>
<dbReference type="Pfam" id="PF00646">
    <property type="entry name" value="F-box"/>
    <property type="match status" value="1"/>
</dbReference>
<dbReference type="Pfam" id="PF08268">
    <property type="entry name" value="FBA_3"/>
    <property type="match status" value="1"/>
</dbReference>
<dbReference type="SMART" id="SM00256">
    <property type="entry name" value="FBOX"/>
    <property type="match status" value="1"/>
</dbReference>
<dbReference type="SUPFAM" id="SSF81383">
    <property type="entry name" value="F-box domain"/>
    <property type="match status" value="1"/>
</dbReference>
<dbReference type="PROSITE" id="PS50181">
    <property type="entry name" value="FBOX"/>
    <property type="match status" value="1"/>
</dbReference>
<accession>Q9SVX4</accession>
<accession>F4J3F5</accession>
<feature type="chain" id="PRO_0000283475" description="F-box protein At3g57590">
    <location>
        <begin position="1"/>
        <end position="404"/>
    </location>
</feature>
<feature type="domain" description="F-box" evidence="1">
    <location>
        <begin position="1"/>
        <end position="47"/>
    </location>
</feature>
<feature type="sequence conflict" description="In Ref. 2; AEE79676." evidence="2" ref="2">
    <original>I</original>
    <variation>M</variation>
    <location>
        <position position="34"/>
    </location>
</feature>
<gene>
    <name type="ordered locus">At3g57590</name>
    <name type="ORF">F15B8.220</name>
</gene>
<organism>
    <name type="scientific">Arabidopsis thaliana</name>
    <name type="common">Mouse-ear cress</name>
    <dbReference type="NCBI Taxonomy" id="3702"/>
    <lineage>
        <taxon>Eukaryota</taxon>
        <taxon>Viridiplantae</taxon>
        <taxon>Streptophyta</taxon>
        <taxon>Embryophyta</taxon>
        <taxon>Tracheophyta</taxon>
        <taxon>Spermatophyta</taxon>
        <taxon>Magnoliopsida</taxon>
        <taxon>eudicotyledons</taxon>
        <taxon>Gunneridae</taxon>
        <taxon>Pentapetalae</taxon>
        <taxon>rosids</taxon>
        <taxon>malvids</taxon>
        <taxon>Brassicales</taxon>
        <taxon>Brassicaceae</taxon>
        <taxon>Camelineae</taxon>
        <taxon>Arabidopsis</taxon>
    </lineage>
</organism>
<proteinExistence type="evidence at transcript level"/>
<name>FB205_ARATH</name>
<keyword id="KW-1185">Reference proteome</keyword>
<reference key="1">
    <citation type="journal article" date="2000" name="Nature">
        <title>Sequence and analysis of chromosome 3 of the plant Arabidopsis thaliana.</title>
        <authorList>
            <person name="Salanoubat M."/>
            <person name="Lemcke K."/>
            <person name="Rieger M."/>
            <person name="Ansorge W."/>
            <person name="Unseld M."/>
            <person name="Fartmann B."/>
            <person name="Valle G."/>
            <person name="Bloecker H."/>
            <person name="Perez-Alonso M."/>
            <person name="Obermaier B."/>
            <person name="Delseny M."/>
            <person name="Boutry M."/>
            <person name="Grivell L.A."/>
            <person name="Mache R."/>
            <person name="Puigdomenech P."/>
            <person name="De Simone V."/>
            <person name="Choisne N."/>
            <person name="Artiguenave F."/>
            <person name="Robert C."/>
            <person name="Brottier P."/>
            <person name="Wincker P."/>
            <person name="Cattolico L."/>
            <person name="Weissenbach J."/>
            <person name="Saurin W."/>
            <person name="Quetier F."/>
            <person name="Schaefer M."/>
            <person name="Mueller-Auer S."/>
            <person name="Gabel C."/>
            <person name="Fuchs M."/>
            <person name="Benes V."/>
            <person name="Wurmbach E."/>
            <person name="Drzonek H."/>
            <person name="Erfle H."/>
            <person name="Jordan N."/>
            <person name="Bangert S."/>
            <person name="Wiedelmann R."/>
            <person name="Kranz H."/>
            <person name="Voss H."/>
            <person name="Holland R."/>
            <person name="Brandt P."/>
            <person name="Nyakatura G."/>
            <person name="Vezzi A."/>
            <person name="D'Angelo M."/>
            <person name="Pallavicini A."/>
            <person name="Toppo S."/>
            <person name="Simionati B."/>
            <person name="Conrad A."/>
            <person name="Hornischer K."/>
            <person name="Kauer G."/>
            <person name="Loehnert T.-H."/>
            <person name="Nordsiek G."/>
            <person name="Reichelt J."/>
            <person name="Scharfe M."/>
            <person name="Schoen O."/>
            <person name="Bargues M."/>
            <person name="Terol J."/>
            <person name="Climent J."/>
            <person name="Navarro P."/>
            <person name="Collado C."/>
            <person name="Perez-Perez A."/>
            <person name="Ottenwaelder B."/>
            <person name="Duchemin D."/>
            <person name="Cooke R."/>
            <person name="Laudie M."/>
            <person name="Berger-Llauro C."/>
            <person name="Purnelle B."/>
            <person name="Masuy D."/>
            <person name="de Haan M."/>
            <person name="Maarse A.C."/>
            <person name="Alcaraz J.-P."/>
            <person name="Cottet A."/>
            <person name="Casacuberta E."/>
            <person name="Monfort A."/>
            <person name="Argiriou A."/>
            <person name="Flores M."/>
            <person name="Liguori R."/>
            <person name="Vitale D."/>
            <person name="Mannhaupt G."/>
            <person name="Haase D."/>
            <person name="Schoof H."/>
            <person name="Rudd S."/>
            <person name="Zaccaria P."/>
            <person name="Mewes H.-W."/>
            <person name="Mayer K.F.X."/>
            <person name="Kaul S."/>
            <person name="Town C.D."/>
            <person name="Koo H.L."/>
            <person name="Tallon L.J."/>
            <person name="Jenkins J."/>
            <person name="Rooney T."/>
            <person name="Rizzo M."/>
            <person name="Walts A."/>
            <person name="Utterback T."/>
            <person name="Fujii C.Y."/>
            <person name="Shea T.P."/>
            <person name="Creasy T.H."/>
            <person name="Haas B."/>
            <person name="Maiti R."/>
            <person name="Wu D."/>
            <person name="Peterson J."/>
            <person name="Van Aken S."/>
            <person name="Pai G."/>
            <person name="Militscher J."/>
            <person name="Sellers P."/>
            <person name="Gill J.E."/>
            <person name="Feldblyum T.V."/>
            <person name="Preuss D."/>
            <person name="Lin X."/>
            <person name="Nierman W.C."/>
            <person name="Salzberg S.L."/>
            <person name="White O."/>
            <person name="Venter J.C."/>
            <person name="Fraser C.M."/>
            <person name="Kaneko T."/>
            <person name="Nakamura Y."/>
            <person name="Sato S."/>
            <person name="Kato T."/>
            <person name="Asamizu E."/>
            <person name="Sasamoto S."/>
            <person name="Kimura T."/>
            <person name="Idesawa K."/>
            <person name="Kawashima K."/>
            <person name="Kishida Y."/>
            <person name="Kiyokawa C."/>
            <person name="Kohara M."/>
            <person name="Matsumoto M."/>
            <person name="Matsuno A."/>
            <person name="Muraki A."/>
            <person name="Nakayama S."/>
            <person name="Nakazaki N."/>
            <person name="Shinpo S."/>
            <person name="Takeuchi C."/>
            <person name="Wada T."/>
            <person name="Watanabe A."/>
            <person name="Yamada M."/>
            <person name="Yasuda M."/>
            <person name="Tabata S."/>
        </authorList>
    </citation>
    <scope>NUCLEOTIDE SEQUENCE [LARGE SCALE GENOMIC DNA]</scope>
    <source>
        <strain>cv. Columbia</strain>
    </source>
</reference>
<reference key="2">
    <citation type="journal article" date="2017" name="Plant J.">
        <title>Araport11: a complete reannotation of the Arabidopsis thaliana reference genome.</title>
        <authorList>
            <person name="Cheng C.Y."/>
            <person name="Krishnakumar V."/>
            <person name="Chan A.P."/>
            <person name="Thibaud-Nissen F."/>
            <person name="Schobel S."/>
            <person name="Town C.D."/>
        </authorList>
    </citation>
    <scope>GENOME REANNOTATION</scope>
    <scope>SEQUENCE REVISION</scope>
    <source>
        <strain>cv. Columbia</strain>
    </source>
</reference>
<protein>
    <recommendedName>
        <fullName>F-box protein At3g57590</fullName>
    </recommendedName>
</protein>
<evidence type="ECO:0000255" key="1">
    <source>
        <dbReference type="PROSITE-ProRule" id="PRU00080"/>
    </source>
</evidence>
<evidence type="ECO:0000305" key="2"/>
<sequence length="404" mass="46319">MEPIPNDLILEIFSRLPAKSVIGFRTLSKHWASILRSPVFTELFLTRSSNRPRLLFAAERNGEWLFFSSPQPQNRYEKSSHLDYHTKFSGDVSRFICSYVSGLLCFPDLWLSKDASPVICNPTTGMYESLPDLMRYKNARGFLGFDPIGKQFKVLSEAYPFSDQREHHEILTLGTEELSWRSNIISCPAYDRSLSEGICINGVLYYLAQTLGVPSCVIICFDVRSEEFKYFDAGCFNDQLDDTSGLILVNYEGKLSGINWKYGQAGERRTVELRMWVLEDAEKHEWVKYVYTLPENEVLDSCDFSVAGVTTRGDIVLCMKYTCKPFYVFYFNPERNTLQSVEIQDFGANLEAVENCGRVYAFVNHVEDLRVNKGKQLKSSISQVKHLCSCCNKVSQPDYHYQKA</sequence>